<feature type="chain" id="PRO_1000194124" description="Small ribosomal subunit protein uS12">
    <location>
        <begin position="1"/>
        <end position="140"/>
    </location>
</feature>
<feature type="modified residue" description="3-methylthioaspartic acid" evidence="1">
    <location>
        <position position="102"/>
    </location>
</feature>
<accession>B7JKB4</accession>
<reference key="1">
    <citation type="submission" date="2008-10" db="EMBL/GenBank/DDBJ databases">
        <title>Genome sequence of Bacillus cereus AH820.</title>
        <authorList>
            <person name="Dodson R.J."/>
            <person name="Durkin A.S."/>
            <person name="Rosovitz M.J."/>
            <person name="Rasko D.A."/>
            <person name="Hoffmaster A."/>
            <person name="Ravel J."/>
            <person name="Sutton G."/>
        </authorList>
    </citation>
    <scope>NUCLEOTIDE SEQUENCE [LARGE SCALE GENOMIC DNA]</scope>
    <source>
        <strain>AH820</strain>
    </source>
</reference>
<comment type="function">
    <text evidence="2">With S4 and S5 plays an important role in translational accuracy.</text>
</comment>
<comment type="function">
    <text evidence="2">Interacts with and stabilizes bases of the 16S rRNA that are involved in tRNA selection in the A site and with the mRNA backbone. Located at the interface of the 30S and 50S subunits, it traverses the body of the 30S subunit contacting proteins on the other side and probably holding the rRNA structure together. The combined cluster of proteins S8, S12 and S17 appears to hold together the shoulder and platform of the 30S subunit.</text>
</comment>
<comment type="subunit">
    <text evidence="2">Part of the 30S ribosomal subunit. Contacts proteins S8 and S17. May interact with IF1 in the 30S initiation complex.</text>
</comment>
<comment type="similarity">
    <text evidence="2">Belongs to the universal ribosomal protein uS12 family.</text>
</comment>
<keyword id="KW-0488">Methylation</keyword>
<keyword id="KW-0687">Ribonucleoprotein</keyword>
<keyword id="KW-0689">Ribosomal protein</keyword>
<keyword id="KW-0694">RNA-binding</keyword>
<keyword id="KW-0699">rRNA-binding</keyword>
<keyword id="KW-0820">tRNA-binding</keyword>
<dbReference type="EMBL" id="CP001283">
    <property type="protein sequence ID" value="ACK90276.1"/>
    <property type="molecule type" value="Genomic_DNA"/>
</dbReference>
<dbReference type="RefSeq" id="WP_001142340.1">
    <property type="nucleotide sequence ID" value="NC_011773.1"/>
</dbReference>
<dbReference type="SMR" id="B7JKB4"/>
<dbReference type="GeneID" id="93010948"/>
<dbReference type="KEGG" id="bcu:BCAH820_0117"/>
<dbReference type="HOGENOM" id="CLU_104295_1_2_9"/>
<dbReference type="Proteomes" id="UP000001363">
    <property type="component" value="Chromosome"/>
</dbReference>
<dbReference type="GO" id="GO:0015935">
    <property type="term" value="C:small ribosomal subunit"/>
    <property type="evidence" value="ECO:0007669"/>
    <property type="project" value="InterPro"/>
</dbReference>
<dbReference type="GO" id="GO:0019843">
    <property type="term" value="F:rRNA binding"/>
    <property type="evidence" value="ECO:0007669"/>
    <property type="project" value="UniProtKB-UniRule"/>
</dbReference>
<dbReference type="GO" id="GO:0003735">
    <property type="term" value="F:structural constituent of ribosome"/>
    <property type="evidence" value="ECO:0007669"/>
    <property type="project" value="InterPro"/>
</dbReference>
<dbReference type="GO" id="GO:0000049">
    <property type="term" value="F:tRNA binding"/>
    <property type="evidence" value="ECO:0007669"/>
    <property type="project" value="UniProtKB-UniRule"/>
</dbReference>
<dbReference type="GO" id="GO:0006412">
    <property type="term" value="P:translation"/>
    <property type="evidence" value="ECO:0007669"/>
    <property type="project" value="UniProtKB-UniRule"/>
</dbReference>
<dbReference type="CDD" id="cd03368">
    <property type="entry name" value="Ribosomal_S12"/>
    <property type="match status" value="1"/>
</dbReference>
<dbReference type="FunFam" id="2.40.50.140:FF:000001">
    <property type="entry name" value="30S ribosomal protein S12"/>
    <property type="match status" value="1"/>
</dbReference>
<dbReference type="Gene3D" id="2.40.50.140">
    <property type="entry name" value="Nucleic acid-binding proteins"/>
    <property type="match status" value="1"/>
</dbReference>
<dbReference type="HAMAP" id="MF_00403_B">
    <property type="entry name" value="Ribosomal_uS12_B"/>
    <property type="match status" value="1"/>
</dbReference>
<dbReference type="InterPro" id="IPR012340">
    <property type="entry name" value="NA-bd_OB-fold"/>
</dbReference>
<dbReference type="InterPro" id="IPR006032">
    <property type="entry name" value="Ribosomal_uS12"/>
</dbReference>
<dbReference type="InterPro" id="IPR005679">
    <property type="entry name" value="Ribosomal_uS12_bac"/>
</dbReference>
<dbReference type="NCBIfam" id="TIGR00981">
    <property type="entry name" value="rpsL_bact"/>
    <property type="match status" value="1"/>
</dbReference>
<dbReference type="PANTHER" id="PTHR11652">
    <property type="entry name" value="30S RIBOSOMAL PROTEIN S12 FAMILY MEMBER"/>
    <property type="match status" value="1"/>
</dbReference>
<dbReference type="Pfam" id="PF00164">
    <property type="entry name" value="Ribosom_S12_S23"/>
    <property type="match status" value="1"/>
</dbReference>
<dbReference type="PRINTS" id="PR01034">
    <property type="entry name" value="RIBOSOMALS12"/>
</dbReference>
<dbReference type="SUPFAM" id="SSF50249">
    <property type="entry name" value="Nucleic acid-binding proteins"/>
    <property type="match status" value="1"/>
</dbReference>
<dbReference type="PROSITE" id="PS00055">
    <property type="entry name" value="RIBOSOMAL_S12"/>
    <property type="match status" value="1"/>
</dbReference>
<proteinExistence type="inferred from homology"/>
<sequence length="140" mass="15446">MPTINQLVRNGRTDKVWKSKSPALNKGFNSLKKKSTDISAPQKRGVCTRVGTMTPKKPNSALRKYARVRLTNGIEVTAYIPGIGHNLQEHSVVLIRGGRVKDLPGVRYHIVRGALDTAGVDKRMQGRSKYGTKKPKAAKK</sequence>
<protein>
    <recommendedName>
        <fullName evidence="2">Small ribosomal subunit protein uS12</fullName>
    </recommendedName>
    <alternativeName>
        <fullName evidence="3">30S ribosomal protein S12</fullName>
    </alternativeName>
</protein>
<evidence type="ECO:0000250" key="1"/>
<evidence type="ECO:0000255" key="2">
    <source>
        <dbReference type="HAMAP-Rule" id="MF_00403"/>
    </source>
</evidence>
<evidence type="ECO:0000305" key="3"/>
<gene>
    <name evidence="2" type="primary">rpsL</name>
    <name type="ordered locus">BCAH820_0117</name>
</gene>
<organism>
    <name type="scientific">Bacillus cereus (strain AH820)</name>
    <dbReference type="NCBI Taxonomy" id="405535"/>
    <lineage>
        <taxon>Bacteria</taxon>
        <taxon>Bacillati</taxon>
        <taxon>Bacillota</taxon>
        <taxon>Bacilli</taxon>
        <taxon>Bacillales</taxon>
        <taxon>Bacillaceae</taxon>
        <taxon>Bacillus</taxon>
        <taxon>Bacillus cereus group</taxon>
    </lineage>
</organism>
<name>RS12_BACC0</name>